<organismHost>
    <name type="scientific">Bacteroides intestinalis</name>
    <dbReference type="NCBI Taxonomy" id="329854"/>
</organismHost>
<keyword id="KW-0002">3D-structure</keyword>
<keyword id="KW-1185">Reference proteome</keyword>
<keyword id="KW-1227">Viral tail protein</keyword>
<keyword id="KW-0946">Virion</keyword>
<evidence type="ECO:0000269" key="1">
    <source>
    </source>
</evidence>
<evidence type="ECO:0000303" key="2">
    <source>
    </source>
</evidence>
<evidence type="ECO:0000303" key="3">
    <source>
    </source>
</evidence>
<evidence type="ECO:0000312" key="4">
    <source>
        <dbReference type="EMBL" id="AXQ62682.1"/>
    </source>
</evidence>
<evidence type="ECO:0007829" key="5">
    <source>
        <dbReference type="PDB" id="7QOJ"/>
    </source>
</evidence>
<evidence type="ECO:0007829" key="6">
    <source>
        <dbReference type="PDB" id="7QOL"/>
    </source>
</evidence>
<sequence>MDKMLEISEEAITRYFTTLSQFGYKKYSDVDKIIVLFFMEEMLAGEMSYYVTQDDYRNIVNALYCLAGSTCMIDFPMFESYDTLVHSNNRTFVPRITEDSILRSTEDDNFRVEA</sequence>
<organism>
    <name type="scientific">Bacteroides phage crAss001</name>
    <name type="common">Bacteroides phage PhiCrAss001</name>
    <dbReference type="NCBI Taxonomy" id="2301731"/>
    <lineage>
        <taxon>Viruses</taxon>
        <taxon>Duplodnaviria</taxon>
        <taxon>Heunggongvirae</taxon>
        <taxon>Uroviricota</taxon>
        <taxon>Caudoviricetes</taxon>
        <taxon>Crassvirales</taxon>
        <taxon>Steigviridae</taxon>
        <taxon>Asinivirinae</taxon>
        <taxon>Kehishuvirus</taxon>
        <taxon>Kehishuvirus primarius</taxon>
    </lineage>
</organism>
<gene>
    <name evidence="4" type="ORF">crAss001_39</name>
</gene>
<accession>A0A385DVM6</accession>
<reference key="1">
    <citation type="journal article" date="2018" name="Nat. Commun.">
        <title>PhiCrAss001 represents the most abundant bacteriophage family in the human gut and infects Bacteroides intestinalis.</title>
        <authorList>
            <person name="Shkoporov A.N."/>
            <person name="Khokhlova E.V."/>
            <person name="Fitzgerald C.B."/>
            <person name="Stockdale S.R."/>
            <person name="Draper L.A."/>
            <person name="Ross R.P."/>
            <person name="Hill C."/>
        </authorList>
    </citation>
    <scope>NUCLEOTIDE SEQUENCE [LARGE SCALE GENOMIC DNA]</scope>
</reference>
<reference key="2">
    <citation type="journal article" date="2023" name="Nature">
        <title>Structural atlas of a human gut crassvirus.</title>
        <authorList>
            <person name="Bayfield O.W."/>
            <person name="Shkoporov A.N."/>
            <person name="Yutin N."/>
            <person name="Khokhlova E.V."/>
            <person name="Smith J.L.R."/>
            <person name="Hawkins D.E.D.P."/>
            <person name="Koonin E.V."/>
            <person name="Hill C."/>
            <person name="Antson A.A."/>
        </authorList>
    </citation>
    <scope>SUBCELLULAR LOCATION</scope>
    <scope>FUNCTION</scope>
</reference>
<comment type="function">
    <text evidence="1">Forms the tail hub together with tail hub protein A (THA).</text>
</comment>
<comment type="subunit">
    <text evidence="1">Heterotrimer with THA (PubMed:37138077). The heterotrimers further assemble as 12 docking hubs that anchor the trimeric tail fibers (PubMed:37138077).</text>
</comment>
<comment type="subcellular location">
    <subcellularLocation>
        <location evidence="1">Virion</location>
    </subcellularLocation>
    <text evidence="1">The tail hub is assembled as a collar around the tail barrel.</text>
</comment>
<protein>
    <recommendedName>
        <fullName evidence="3">Tail hub protein B</fullName>
        <shortName evidence="3">THB</shortName>
    </recommendedName>
    <alternativeName>
        <fullName evidence="2">Gene product 39</fullName>
        <shortName evidence="2">gp39</shortName>
    </alternativeName>
</protein>
<proteinExistence type="evidence at protein level"/>
<dbReference type="EMBL" id="MH675552">
    <property type="protein sequence ID" value="AXQ62682.1"/>
    <property type="molecule type" value="Genomic_DNA"/>
</dbReference>
<dbReference type="PDB" id="7QOJ">
    <property type="method" value="EM"/>
    <property type="resolution" value="3.21 A"/>
    <property type="chains" value="I=1-114"/>
</dbReference>
<dbReference type="PDB" id="7QOL">
    <property type="method" value="EM"/>
    <property type="resolution" value="3.33 A"/>
    <property type="chains" value="I/a=1-114"/>
</dbReference>
<dbReference type="PDB" id="8CKB">
    <property type="method" value="EM"/>
    <property type="resolution" value="4.39 A"/>
    <property type="chains" value="P001/P002/P003/P004/P005/P006/P007/P008/P009/P010/P011/P012=1-114"/>
</dbReference>
<dbReference type="PDBsum" id="7QOJ"/>
<dbReference type="PDBsum" id="7QOL"/>
<dbReference type="PDBsum" id="8CKB"/>
<dbReference type="EMDB" id="EMD-14092"/>
<dbReference type="EMDB" id="EMD-14094"/>
<dbReference type="SMR" id="A0A385DVM6"/>
<dbReference type="Proteomes" id="UP000262320">
    <property type="component" value="Genome"/>
</dbReference>
<dbReference type="GO" id="GO:0098015">
    <property type="term" value="C:virus tail"/>
    <property type="evidence" value="ECO:0007669"/>
    <property type="project" value="UniProtKB-KW"/>
</dbReference>
<name>THB_BPCA1</name>
<feature type="chain" id="PRO_0000458035" description="Tail hub protein B">
    <location>
        <begin position="1"/>
        <end position="114"/>
    </location>
</feature>
<feature type="helix" evidence="5">
    <location>
        <begin position="3"/>
        <end position="21"/>
    </location>
</feature>
<feature type="helix" evidence="5">
    <location>
        <begin position="27"/>
        <end position="43"/>
    </location>
</feature>
<feature type="helix" evidence="5">
    <location>
        <begin position="48"/>
        <end position="50"/>
    </location>
</feature>
<feature type="helix" evidence="5">
    <location>
        <begin position="53"/>
        <end position="63"/>
    </location>
</feature>
<feature type="helix" evidence="6">
    <location>
        <begin position="64"/>
        <end position="66"/>
    </location>
</feature>
<feature type="turn" evidence="5">
    <location>
        <begin position="67"/>
        <end position="69"/>
    </location>
</feature>
<feature type="strand" evidence="5">
    <location>
        <begin position="70"/>
        <end position="73"/>
    </location>
</feature>
<feature type="strand" evidence="5">
    <location>
        <begin position="101"/>
        <end position="104"/>
    </location>
</feature>